<evidence type="ECO:0000250" key="1">
    <source>
        <dbReference type="UniProtKB" id="P0DN70"/>
    </source>
</evidence>
<evidence type="ECO:0000255" key="2">
    <source>
        <dbReference type="PROSITE-ProRule" id="PRU00490"/>
    </source>
</evidence>
<evidence type="ECO:0000305" key="3"/>
<accession>Q8P0X2</accession>
<comment type="function">
    <text evidence="1">ADP-ribosylhydrolase that specifically reverses the SirTM-mediated mono-ADP-ribosylation at an asparatate residue of GcvH-L, by releasing ADP-ribose from the target protein (By similarity). May play a role in the regulation of the response to host-induced oxidative stress (By similarity).</text>
</comment>
<comment type="catalytic activity">
    <reaction evidence="1">
        <text>4-O-(ADP-D-ribosyl)-L-aspartyl-[protein] + H2O = L-aspartyl-[protein] + ADP-D-ribose + H(+)</text>
        <dbReference type="Rhea" id="RHEA:54428"/>
        <dbReference type="Rhea" id="RHEA-COMP:9867"/>
        <dbReference type="Rhea" id="RHEA-COMP:13832"/>
        <dbReference type="ChEBI" id="CHEBI:15377"/>
        <dbReference type="ChEBI" id="CHEBI:15378"/>
        <dbReference type="ChEBI" id="CHEBI:29961"/>
        <dbReference type="ChEBI" id="CHEBI:57967"/>
        <dbReference type="ChEBI" id="CHEBI:138102"/>
    </reaction>
    <physiologicalReaction direction="left-to-right" evidence="1">
        <dbReference type="Rhea" id="RHEA:54429"/>
    </physiologicalReaction>
</comment>
<comment type="cofactor">
    <cofactor evidence="1">
        <name>Zn(2+)</name>
        <dbReference type="ChEBI" id="CHEBI:29105"/>
    </cofactor>
    <text evidence="1">Binds 1 Zn(2+) ion per subunit.</text>
</comment>
<comment type="similarity">
    <text evidence="3">Belongs to the MacroD-type family. Zn-Macro subfamily.</text>
</comment>
<name>ADPRH_STRP8</name>
<keyword id="KW-0326">Glycosidase</keyword>
<keyword id="KW-0378">Hydrolase</keyword>
<keyword id="KW-0479">Metal-binding</keyword>
<keyword id="KW-0862">Zinc</keyword>
<protein>
    <recommendedName>
        <fullName evidence="1">Protein-ADP-ribose hydrolase</fullName>
        <ecNumber evidence="1">3.2.1.-</ecNumber>
    </recommendedName>
</protein>
<feature type="chain" id="PRO_0000089220" description="Protein-ADP-ribose hydrolase">
    <location>
        <begin position="1"/>
        <end position="270"/>
    </location>
</feature>
<feature type="domain" description="Macro" evidence="2">
    <location>
        <begin position="73"/>
        <end position="267"/>
    </location>
</feature>
<feature type="binding site" evidence="1">
    <location>
        <position position="92"/>
    </location>
    <ligand>
        <name>ADP-D-ribose</name>
        <dbReference type="ChEBI" id="CHEBI:57967"/>
    </ligand>
</feature>
<feature type="binding site" evidence="1">
    <location>
        <position position="93"/>
    </location>
    <ligand>
        <name>ADP-D-ribose</name>
        <dbReference type="ChEBI" id="CHEBI:57967"/>
    </ligand>
</feature>
<feature type="binding site" evidence="1">
    <location>
        <position position="106"/>
    </location>
    <ligand>
        <name>ADP-D-ribose</name>
        <dbReference type="ChEBI" id="CHEBI:57967"/>
    </ligand>
</feature>
<feature type="binding site" evidence="1">
    <location>
        <position position="112"/>
    </location>
    <ligand>
        <name>Zn(2+)</name>
        <dbReference type="ChEBI" id="CHEBI:29105"/>
    </ligand>
</feature>
<feature type="binding site" evidence="1">
    <location>
        <position position="117"/>
    </location>
    <ligand>
        <name>Zn(2+)</name>
        <dbReference type="ChEBI" id="CHEBI:29105"/>
    </ligand>
</feature>
<feature type="binding site" evidence="1">
    <location>
        <position position="119"/>
    </location>
    <ligand>
        <name>ADP-D-ribose</name>
        <dbReference type="ChEBI" id="CHEBI:57967"/>
    </ligand>
</feature>
<feature type="binding site" evidence="1">
    <location>
        <position position="119"/>
    </location>
    <ligand>
        <name>Zn(2+)</name>
        <dbReference type="ChEBI" id="CHEBI:29105"/>
    </ligand>
</feature>
<feature type="binding site" evidence="1">
    <location>
        <position position="120"/>
    </location>
    <ligand>
        <name>ADP-D-ribose</name>
        <dbReference type="ChEBI" id="CHEBI:57967"/>
    </ligand>
</feature>
<feature type="binding site" evidence="1">
    <location>
        <position position="121"/>
    </location>
    <ligand>
        <name>ADP-D-ribose</name>
        <dbReference type="ChEBI" id="CHEBI:57967"/>
    </ligand>
</feature>
<feature type="binding site" evidence="1">
    <location>
        <position position="212"/>
    </location>
    <ligand>
        <name>ADP-D-ribose</name>
        <dbReference type="ChEBI" id="CHEBI:57967"/>
    </ligand>
</feature>
<feature type="binding site" evidence="1">
    <location>
        <position position="213"/>
    </location>
    <ligand>
        <name>ADP-D-ribose</name>
        <dbReference type="ChEBI" id="CHEBI:57967"/>
    </ligand>
</feature>
<feature type="binding site" evidence="1">
    <location>
        <position position="214"/>
    </location>
    <ligand>
        <name>ADP-D-ribose</name>
        <dbReference type="ChEBI" id="CHEBI:57967"/>
    </ligand>
</feature>
<feature type="binding site" evidence="1">
    <location>
        <position position="215"/>
    </location>
    <ligand>
        <name>ADP-D-ribose</name>
        <dbReference type="ChEBI" id="CHEBI:57967"/>
    </ligand>
</feature>
<feature type="binding site" evidence="1">
    <location>
        <position position="216"/>
    </location>
    <ligand>
        <name>ADP-D-ribose</name>
        <dbReference type="ChEBI" id="CHEBI:57967"/>
    </ligand>
</feature>
<proteinExistence type="inferred from homology"/>
<organism>
    <name type="scientific">Streptococcus pyogenes serotype M18 (strain MGAS8232)</name>
    <dbReference type="NCBI Taxonomy" id="186103"/>
    <lineage>
        <taxon>Bacteria</taxon>
        <taxon>Bacillati</taxon>
        <taxon>Bacillota</taxon>
        <taxon>Bacilli</taxon>
        <taxon>Lactobacillales</taxon>
        <taxon>Streptococcaceae</taxon>
        <taxon>Streptococcus</taxon>
    </lineage>
</organism>
<sequence>MPSSFDLLGEMIGLLQTEQLTSSLACPLPNALTKRQDLWRALINQRPALPLSKDYLNLEDAYLDDWRASFVPVSVKDCQKTNYTSLFLYHGDIRYLAVDAIVNAANSELLGCFIPNHGCIDNAIHTFAGSRLRLACQAIMTEQGRKEAIGQAKLTSAYHLPASYIIHTVGPRITKGRHVSPIRADLLARCYRSSLDLAVKAGLTSLAFCSISTGEFGFPKKEAAQIAIKTVLKWQAEHPESKTLTIIFNTFTSEDKALYDTYLQKENNCE</sequence>
<reference key="1">
    <citation type="journal article" date="2002" name="Proc. Natl. Acad. Sci. U.S.A.">
        <title>Genome sequence and comparative microarray analysis of serotype M18 group A Streptococcus strains associated with acute rheumatic fever outbreaks.</title>
        <authorList>
            <person name="Smoot J.C."/>
            <person name="Barbian K.D."/>
            <person name="Van Gompel J.J."/>
            <person name="Smoot L.M."/>
            <person name="Chaussee M.S."/>
            <person name="Sylva G.L."/>
            <person name="Sturdevant D.E."/>
            <person name="Ricklefs S.M."/>
            <person name="Porcella S.F."/>
            <person name="Parkins L.D."/>
            <person name="Beres S.B."/>
            <person name="Campbell D.S."/>
            <person name="Smith T.M."/>
            <person name="Zhang Q."/>
            <person name="Kapur V."/>
            <person name="Daly J.A."/>
            <person name="Veasy L.G."/>
            <person name="Musser J.M."/>
        </authorList>
    </citation>
    <scope>NUCLEOTIDE SEQUENCE [LARGE SCALE GENOMIC DNA]</scope>
    <source>
        <strain>MGAS8232</strain>
    </source>
</reference>
<gene>
    <name type="ordered locus">spyM18_1168</name>
</gene>
<dbReference type="EC" id="3.2.1.-" evidence="1"/>
<dbReference type="EMBL" id="AE009949">
    <property type="protein sequence ID" value="AAL97784.1"/>
    <property type="molecule type" value="Genomic_DNA"/>
</dbReference>
<dbReference type="RefSeq" id="WP_011017801.1">
    <property type="nucleotide sequence ID" value="NC_003485.1"/>
</dbReference>
<dbReference type="SMR" id="Q8P0X2"/>
<dbReference type="KEGG" id="spm:spyM18_1168"/>
<dbReference type="HOGENOM" id="CLU_046550_2_1_9"/>
<dbReference type="GO" id="GO:0004649">
    <property type="term" value="F:poly(ADP-ribose) glycohydrolase activity"/>
    <property type="evidence" value="ECO:0000250"/>
    <property type="project" value="UniProtKB"/>
</dbReference>
<dbReference type="CDD" id="cd02908">
    <property type="entry name" value="Macro_OAADPr_deacetylase"/>
    <property type="match status" value="1"/>
</dbReference>
<dbReference type="FunFam" id="3.40.220.10:FF:000018">
    <property type="entry name" value="Protein-ADP-ribose hydrolase"/>
    <property type="match status" value="1"/>
</dbReference>
<dbReference type="Gene3D" id="3.40.220.10">
    <property type="entry name" value="Leucine Aminopeptidase, subunit E, domain 1"/>
    <property type="match status" value="1"/>
</dbReference>
<dbReference type="InterPro" id="IPR002589">
    <property type="entry name" value="Macro_dom"/>
</dbReference>
<dbReference type="InterPro" id="IPR043472">
    <property type="entry name" value="Macro_dom-like"/>
</dbReference>
<dbReference type="NCBIfam" id="NF003163">
    <property type="entry name" value="PRK04143.1"/>
    <property type="match status" value="1"/>
</dbReference>
<dbReference type="PANTHER" id="PTHR11106:SF121">
    <property type="entry name" value="ADP-RIBOSE 1''-PHOSPHATE PHOSPHATASE"/>
    <property type="match status" value="1"/>
</dbReference>
<dbReference type="PANTHER" id="PTHR11106">
    <property type="entry name" value="GANGLIOSIDE INDUCED DIFFERENTIATION ASSOCIATED PROTEIN 2-RELATED"/>
    <property type="match status" value="1"/>
</dbReference>
<dbReference type="Pfam" id="PF01661">
    <property type="entry name" value="Macro"/>
    <property type="match status" value="1"/>
</dbReference>
<dbReference type="SMART" id="SM00506">
    <property type="entry name" value="A1pp"/>
    <property type="match status" value="1"/>
</dbReference>
<dbReference type="SUPFAM" id="SSF52949">
    <property type="entry name" value="Macro domain-like"/>
    <property type="match status" value="1"/>
</dbReference>
<dbReference type="PROSITE" id="PS51154">
    <property type="entry name" value="MACRO"/>
    <property type="match status" value="1"/>
</dbReference>